<reference key="1">
    <citation type="journal article" date="2007" name="Science">
        <title>Legumes symbioses: absence of nod genes in photosynthetic bradyrhizobia.</title>
        <authorList>
            <person name="Giraud E."/>
            <person name="Moulin L."/>
            <person name="Vallenet D."/>
            <person name="Barbe V."/>
            <person name="Cytryn E."/>
            <person name="Avarre J.-C."/>
            <person name="Jaubert M."/>
            <person name="Simon D."/>
            <person name="Cartieaux F."/>
            <person name="Prin Y."/>
            <person name="Bena G."/>
            <person name="Hannibal L."/>
            <person name="Fardoux J."/>
            <person name="Kojadinovic M."/>
            <person name="Vuillet L."/>
            <person name="Lajus A."/>
            <person name="Cruveiller S."/>
            <person name="Rouy Z."/>
            <person name="Mangenot S."/>
            <person name="Segurens B."/>
            <person name="Dossat C."/>
            <person name="Franck W.L."/>
            <person name="Chang W.-S."/>
            <person name="Saunders E."/>
            <person name="Bruce D."/>
            <person name="Richardson P."/>
            <person name="Normand P."/>
            <person name="Dreyfus B."/>
            <person name="Pignol D."/>
            <person name="Stacey G."/>
            <person name="Emerich D."/>
            <person name="Vermeglio A."/>
            <person name="Medigue C."/>
            <person name="Sadowsky M."/>
        </authorList>
    </citation>
    <scope>NUCLEOTIDE SEQUENCE [LARGE SCALE GENOMIC DNA]</scope>
    <source>
        <strain>BTAi1 / ATCC BAA-1182</strain>
    </source>
</reference>
<dbReference type="EC" id="7.1.1.-" evidence="1"/>
<dbReference type="EMBL" id="CP000494">
    <property type="protein sequence ID" value="ABQ36593.1"/>
    <property type="molecule type" value="Genomic_DNA"/>
</dbReference>
<dbReference type="RefSeq" id="WP_012044588.1">
    <property type="nucleotide sequence ID" value="NC_009485.1"/>
</dbReference>
<dbReference type="SMR" id="A5EK99"/>
<dbReference type="STRING" id="288000.BBta_4562"/>
<dbReference type="KEGG" id="bbt:BBta_4562"/>
<dbReference type="eggNOG" id="COG0377">
    <property type="taxonomic scope" value="Bacteria"/>
</dbReference>
<dbReference type="HOGENOM" id="CLU_055737_7_0_5"/>
<dbReference type="Proteomes" id="UP000000246">
    <property type="component" value="Chromosome"/>
</dbReference>
<dbReference type="GO" id="GO:0005886">
    <property type="term" value="C:plasma membrane"/>
    <property type="evidence" value="ECO:0007669"/>
    <property type="project" value="UniProtKB-SubCell"/>
</dbReference>
<dbReference type="GO" id="GO:0045271">
    <property type="term" value="C:respiratory chain complex I"/>
    <property type="evidence" value="ECO:0007669"/>
    <property type="project" value="TreeGrafter"/>
</dbReference>
<dbReference type="GO" id="GO:0051539">
    <property type="term" value="F:4 iron, 4 sulfur cluster binding"/>
    <property type="evidence" value="ECO:0007669"/>
    <property type="project" value="UniProtKB-KW"/>
</dbReference>
<dbReference type="GO" id="GO:0005506">
    <property type="term" value="F:iron ion binding"/>
    <property type="evidence" value="ECO:0007669"/>
    <property type="project" value="UniProtKB-UniRule"/>
</dbReference>
<dbReference type="GO" id="GO:0008137">
    <property type="term" value="F:NADH dehydrogenase (ubiquinone) activity"/>
    <property type="evidence" value="ECO:0007669"/>
    <property type="project" value="InterPro"/>
</dbReference>
<dbReference type="GO" id="GO:0050136">
    <property type="term" value="F:NADH:ubiquinone reductase (non-electrogenic) activity"/>
    <property type="evidence" value="ECO:0007669"/>
    <property type="project" value="UniProtKB-UniRule"/>
</dbReference>
<dbReference type="GO" id="GO:0048038">
    <property type="term" value="F:quinone binding"/>
    <property type="evidence" value="ECO:0007669"/>
    <property type="project" value="UniProtKB-KW"/>
</dbReference>
<dbReference type="GO" id="GO:0009060">
    <property type="term" value="P:aerobic respiration"/>
    <property type="evidence" value="ECO:0007669"/>
    <property type="project" value="TreeGrafter"/>
</dbReference>
<dbReference type="GO" id="GO:0015990">
    <property type="term" value="P:electron transport coupled proton transport"/>
    <property type="evidence" value="ECO:0007669"/>
    <property type="project" value="TreeGrafter"/>
</dbReference>
<dbReference type="FunFam" id="3.40.50.12280:FF:000001">
    <property type="entry name" value="NADH-quinone oxidoreductase subunit B 2"/>
    <property type="match status" value="1"/>
</dbReference>
<dbReference type="Gene3D" id="3.40.50.12280">
    <property type="match status" value="1"/>
</dbReference>
<dbReference type="HAMAP" id="MF_01356">
    <property type="entry name" value="NDH1_NuoB"/>
    <property type="match status" value="1"/>
</dbReference>
<dbReference type="InterPro" id="IPR006137">
    <property type="entry name" value="NADH_UbQ_OxRdtase-like_20kDa"/>
</dbReference>
<dbReference type="InterPro" id="IPR006138">
    <property type="entry name" value="NADH_UQ_OxRdtase_20Kd_su"/>
</dbReference>
<dbReference type="NCBIfam" id="TIGR01957">
    <property type="entry name" value="nuoB_fam"/>
    <property type="match status" value="1"/>
</dbReference>
<dbReference type="NCBIfam" id="NF005012">
    <property type="entry name" value="PRK06411.1"/>
    <property type="match status" value="1"/>
</dbReference>
<dbReference type="PANTHER" id="PTHR11995">
    <property type="entry name" value="NADH DEHYDROGENASE"/>
    <property type="match status" value="1"/>
</dbReference>
<dbReference type="PANTHER" id="PTHR11995:SF14">
    <property type="entry name" value="NADH DEHYDROGENASE [UBIQUINONE] IRON-SULFUR PROTEIN 7, MITOCHONDRIAL"/>
    <property type="match status" value="1"/>
</dbReference>
<dbReference type="Pfam" id="PF01058">
    <property type="entry name" value="Oxidored_q6"/>
    <property type="match status" value="1"/>
</dbReference>
<dbReference type="SUPFAM" id="SSF56770">
    <property type="entry name" value="HydA/Nqo6-like"/>
    <property type="match status" value="1"/>
</dbReference>
<dbReference type="PROSITE" id="PS01150">
    <property type="entry name" value="COMPLEX1_20K"/>
    <property type="match status" value="1"/>
</dbReference>
<organism>
    <name type="scientific">Bradyrhizobium sp. (strain BTAi1 / ATCC BAA-1182)</name>
    <dbReference type="NCBI Taxonomy" id="288000"/>
    <lineage>
        <taxon>Bacteria</taxon>
        <taxon>Pseudomonadati</taxon>
        <taxon>Pseudomonadota</taxon>
        <taxon>Alphaproteobacteria</taxon>
        <taxon>Hyphomicrobiales</taxon>
        <taxon>Nitrobacteraceae</taxon>
        <taxon>Bradyrhizobium</taxon>
    </lineage>
</organism>
<comment type="function">
    <text evidence="1">NDH-1 shuttles electrons from NADH, via FMN and iron-sulfur (Fe-S) centers, to quinones in the respiratory chain. The immediate electron acceptor for the enzyme in this species is believed to be ubiquinone. Couples the redox reaction to proton translocation (for every two electrons transferred, four hydrogen ions are translocated across the cytoplasmic membrane), and thus conserves the redox energy in a proton gradient.</text>
</comment>
<comment type="catalytic activity">
    <reaction evidence="1">
        <text>a quinone + NADH + 5 H(+)(in) = a quinol + NAD(+) + 4 H(+)(out)</text>
        <dbReference type="Rhea" id="RHEA:57888"/>
        <dbReference type="ChEBI" id="CHEBI:15378"/>
        <dbReference type="ChEBI" id="CHEBI:24646"/>
        <dbReference type="ChEBI" id="CHEBI:57540"/>
        <dbReference type="ChEBI" id="CHEBI:57945"/>
        <dbReference type="ChEBI" id="CHEBI:132124"/>
    </reaction>
</comment>
<comment type="cofactor">
    <cofactor evidence="1">
        <name>[4Fe-4S] cluster</name>
        <dbReference type="ChEBI" id="CHEBI:49883"/>
    </cofactor>
    <text evidence="1">Binds 1 [4Fe-4S] cluster.</text>
</comment>
<comment type="subunit">
    <text evidence="1">NDH-1 is composed of 14 different subunits. Subunits NuoB, C, D, E, F, and G constitute the peripheral sector of the complex.</text>
</comment>
<comment type="subcellular location">
    <subcellularLocation>
        <location evidence="1">Cell inner membrane</location>
        <topology evidence="1">Peripheral membrane protein</topology>
        <orientation evidence="1">Cytoplasmic side</orientation>
    </subcellularLocation>
</comment>
<comment type="similarity">
    <text evidence="1">Belongs to the complex I 20 kDa subunit family.</text>
</comment>
<protein>
    <recommendedName>
        <fullName evidence="1">NADH-quinone oxidoreductase subunit B</fullName>
        <ecNumber evidence="1">7.1.1.-</ecNumber>
    </recommendedName>
    <alternativeName>
        <fullName evidence="1">NADH dehydrogenase I subunit B</fullName>
    </alternativeName>
    <alternativeName>
        <fullName evidence="1">NDH-1 subunit B</fullName>
    </alternativeName>
</protein>
<gene>
    <name evidence="1" type="primary">nuoB</name>
    <name type="ordered locus">BBta_4562</name>
</gene>
<sequence>MSPNPSSTGPVIAPAPKGILDPATGRPIGANDPYFLEVRHELSDKGFFVATADDLITWARTGSLMWMTFGLACCAVEMMQVSMPRYDVERFGFAPRASPRQSDVMIVAGTLTNKMAPALRKVYDQMPEPRYVISMGSCANGGGYYHYSYSVVRGCDRIVPIDIYVPGCPPTAEALLYGVLLLQKKIRRTGTIER</sequence>
<feature type="chain" id="PRO_0000376154" description="NADH-quinone oxidoreductase subunit B">
    <location>
        <begin position="1"/>
        <end position="194"/>
    </location>
</feature>
<feature type="binding site" evidence="1">
    <location>
        <position position="73"/>
    </location>
    <ligand>
        <name>[4Fe-4S] cluster</name>
        <dbReference type="ChEBI" id="CHEBI:49883"/>
    </ligand>
</feature>
<feature type="binding site" evidence="1">
    <location>
        <position position="74"/>
    </location>
    <ligand>
        <name>[4Fe-4S] cluster</name>
        <dbReference type="ChEBI" id="CHEBI:49883"/>
    </ligand>
</feature>
<feature type="binding site" evidence="1">
    <location>
        <position position="138"/>
    </location>
    <ligand>
        <name>[4Fe-4S] cluster</name>
        <dbReference type="ChEBI" id="CHEBI:49883"/>
    </ligand>
</feature>
<feature type="binding site" evidence="1">
    <location>
        <position position="168"/>
    </location>
    <ligand>
        <name>[4Fe-4S] cluster</name>
        <dbReference type="ChEBI" id="CHEBI:49883"/>
    </ligand>
</feature>
<accession>A5EK99</accession>
<proteinExistence type="inferred from homology"/>
<keyword id="KW-0004">4Fe-4S</keyword>
<keyword id="KW-0997">Cell inner membrane</keyword>
<keyword id="KW-1003">Cell membrane</keyword>
<keyword id="KW-0408">Iron</keyword>
<keyword id="KW-0411">Iron-sulfur</keyword>
<keyword id="KW-0472">Membrane</keyword>
<keyword id="KW-0479">Metal-binding</keyword>
<keyword id="KW-0520">NAD</keyword>
<keyword id="KW-0874">Quinone</keyword>
<keyword id="KW-1185">Reference proteome</keyword>
<keyword id="KW-1278">Translocase</keyword>
<keyword id="KW-0813">Transport</keyword>
<keyword id="KW-0830">Ubiquinone</keyword>
<name>NUOB_BRASB</name>
<evidence type="ECO:0000255" key="1">
    <source>
        <dbReference type="HAMAP-Rule" id="MF_01356"/>
    </source>
</evidence>